<evidence type="ECO:0000255" key="1">
    <source>
        <dbReference type="HAMAP-Rule" id="MF_00137"/>
    </source>
</evidence>
<proteinExistence type="inferred from homology"/>
<dbReference type="EC" id="6.3.2.6" evidence="1"/>
<dbReference type="EMBL" id="BX571658">
    <property type="protein sequence ID" value="CAE09738.1"/>
    <property type="molecule type" value="Genomic_DNA"/>
</dbReference>
<dbReference type="RefSeq" id="WP_011138538.1">
    <property type="nucleotide sequence ID" value="NC_005090.1"/>
</dbReference>
<dbReference type="SMR" id="Q7M9X5"/>
<dbReference type="STRING" id="273121.WS0607"/>
<dbReference type="KEGG" id="wsu:WS0607"/>
<dbReference type="eggNOG" id="COG0152">
    <property type="taxonomic scope" value="Bacteria"/>
</dbReference>
<dbReference type="HOGENOM" id="CLU_061495_2_0_7"/>
<dbReference type="UniPathway" id="UPA00074">
    <property type="reaction ID" value="UER00131"/>
</dbReference>
<dbReference type="Proteomes" id="UP000000422">
    <property type="component" value="Chromosome"/>
</dbReference>
<dbReference type="GO" id="GO:0005524">
    <property type="term" value="F:ATP binding"/>
    <property type="evidence" value="ECO:0007669"/>
    <property type="project" value="UniProtKB-KW"/>
</dbReference>
<dbReference type="GO" id="GO:0004639">
    <property type="term" value="F:phosphoribosylaminoimidazolesuccinocarboxamide synthase activity"/>
    <property type="evidence" value="ECO:0007669"/>
    <property type="project" value="UniProtKB-UniRule"/>
</dbReference>
<dbReference type="GO" id="GO:0006189">
    <property type="term" value="P:'de novo' IMP biosynthetic process"/>
    <property type="evidence" value="ECO:0007669"/>
    <property type="project" value="UniProtKB-UniRule"/>
</dbReference>
<dbReference type="GO" id="GO:0009236">
    <property type="term" value="P:cobalamin biosynthetic process"/>
    <property type="evidence" value="ECO:0007669"/>
    <property type="project" value="InterPro"/>
</dbReference>
<dbReference type="CDD" id="cd01415">
    <property type="entry name" value="SAICAR_synt_PurC"/>
    <property type="match status" value="1"/>
</dbReference>
<dbReference type="FunFam" id="3.30.470.20:FF:000006">
    <property type="entry name" value="Phosphoribosylaminoimidazole-succinocarboxamide synthase"/>
    <property type="match status" value="1"/>
</dbReference>
<dbReference type="Gene3D" id="3.30.470.20">
    <property type="entry name" value="ATP-grasp fold, B domain"/>
    <property type="match status" value="1"/>
</dbReference>
<dbReference type="Gene3D" id="3.30.200.20">
    <property type="entry name" value="Phosphorylase Kinase, domain 1"/>
    <property type="match status" value="1"/>
</dbReference>
<dbReference type="HAMAP" id="MF_00137">
    <property type="entry name" value="SAICAR_synth"/>
    <property type="match status" value="1"/>
</dbReference>
<dbReference type="InterPro" id="IPR028923">
    <property type="entry name" value="SAICAR_synt/ADE2_N"/>
</dbReference>
<dbReference type="InterPro" id="IPR033934">
    <property type="entry name" value="SAICAR_synt_PurC"/>
</dbReference>
<dbReference type="InterPro" id="IPR001636">
    <property type="entry name" value="SAICAR_synth"/>
</dbReference>
<dbReference type="InterPro" id="IPR050089">
    <property type="entry name" value="SAICAR_synthetase"/>
</dbReference>
<dbReference type="InterPro" id="IPR018236">
    <property type="entry name" value="SAICAR_synthetase_CS"/>
</dbReference>
<dbReference type="NCBIfam" id="TIGR00081">
    <property type="entry name" value="purC"/>
    <property type="match status" value="1"/>
</dbReference>
<dbReference type="PANTHER" id="PTHR43599">
    <property type="entry name" value="MULTIFUNCTIONAL PROTEIN ADE2"/>
    <property type="match status" value="1"/>
</dbReference>
<dbReference type="PANTHER" id="PTHR43599:SF3">
    <property type="entry name" value="SI:DKEY-6E2.2"/>
    <property type="match status" value="1"/>
</dbReference>
<dbReference type="Pfam" id="PF01259">
    <property type="entry name" value="SAICAR_synt"/>
    <property type="match status" value="1"/>
</dbReference>
<dbReference type="SUPFAM" id="SSF56104">
    <property type="entry name" value="SAICAR synthase-like"/>
    <property type="match status" value="1"/>
</dbReference>
<dbReference type="PROSITE" id="PS01057">
    <property type="entry name" value="SAICAR_SYNTHETASE_1"/>
    <property type="match status" value="1"/>
</dbReference>
<dbReference type="PROSITE" id="PS01058">
    <property type="entry name" value="SAICAR_SYNTHETASE_2"/>
    <property type="match status" value="1"/>
</dbReference>
<protein>
    <recommendedName>
        <fullName evidence="1">Phosphoribosylaminoimidazole-succinocarboxamide synthase</fullName>
        <ecNumber evidence="1">6.3.2.6</ecNumber>
    </recommendedName>
    <alternativeName>
        <fullName evidence="1">SAICAR synthetase</fullName>
    </alternativeName>
</protein>
<accession>Q7M9X5</accession>
<sequence>MEKASMIYEGKGKKLYNTSHPDQVVAEFKDDLTAFNAEKKGNEAGKGALNCQISTEIFKLLEAEGIKTHFIKQLDEKNMLCKRVSIIPIEVVTRNIATGSLSKRLGIKEGSVLPFSLVEFYYKDDALGDPIMNDEHAILLKCVNSQEELEFLKETAREINEILRSFFDSKGLNLVDFKLEFGKDIEGNILLADEISPDSCRFWDKKTNEKLDKDRFRQDLGNVKMAYEEVLRRILN</sequence>
<gene>
    <name evidence="1" type="primary">purC</name>
    <name type="ordered locus">WS0607</name>
</gene>
<organism>
    <name type="scientific">Wolinella succinogenes (strain ATCC 29543 / DSM 1740 / CCUG 13145 / JCM 31913 / LMG 7466 / NCTC 11488 / FDC 602W)</name>
    <name type="common">Vibrio succinogenes</name>
    <dbReference type="NCBI Taxonomy" id="273121"/>
    <lineage>
        <taxon>Bacteria</taxon>
        <taxon>Pseudomonadati</taxon>
        <taxon>Campylobacterota</taxon>
        <taxon>Epsilonproteobacteria</taxon>
        <taxon>Campylobacterales</taxon>
        <taxon>Helicobacteraceae</taxon>
        <taxon>Wolinella</taxon>
    </lineage>
</organism>
<comment type="catalytic activity">
    <reaction evidence="1">
        <text>5-amino-1-(5-phospho-D-ribosyl)imidazole-4-carboxylate + L-aspartate + ATP = (2S)-2-[5-amino-1-(5-phospho-beta-D-ribosyl)imidazole-4-carboxamido]succinate + ADP + phosphate + 2 H(+)</text>
        <dbReference type="Rhea" id="RHEA:22628"/>
        <dbReference type="ChEBI" id="CHEBI:15378"/>
        <dbReference type="ChEBI" id="CHEBI:29991"/>
        <dbReference type="ChEBI" id="CHEBI:30616"/>
        <dbReference type="ChEBI" id="CHEBI:43474"/>
        <dbReference type="ChEBI" id="CHEBI:58443"/>
        <dbReference type="ChEBI" id="CHEBI:77657"/>
        <dbReference type="ChEBI" id="CHEBI:456216"/>
        <dbReference type="EC" id="6.3.2.6"/>
    </reaction>
</comment>
<comment type="pathway">
    <text evidence="1">Purine metabolism; IMP biosynthesis via de novo pathway; 5-amino-1-(5-phospho-D-ribosyl)imidazole-4-carboxamide from 5-amino-1-(5-phospho-D-ribosyl)imidazole-4-carboxylate: step 1/2.</text>
</comment>
<comment type="similarity">
    <text evidence="1">Belongs to the SAICAR synthetase family.</text>
</comment>
<reference key="1">
    <citation type="journal article" date="2003" name="Proc. Natl. Acad. Sci. U.S.A.">
        <title>Complete genome sequence and analysis of Wolinella succinogenes.</title>
        <authorList>
            <person name="Baar C."/>
            <person name="Eppinger M."/>
            <person name="Raddatz G."/>
            <person name="Simon J."/>
            <person name="Lanz C."/>
            <person name="Klimmek O."/>
            <person name="Nandakumar R."/>
            <person name="Gross R."/>
            <person name="Rosinus A."/>
            <person name="Keller H."/>
            <person name="Jagtap P."/>
            <person name="Linke B."/>
            <person name="Meyer F."/>
            <person name="Lederer H."/>
            <person name="Schuster S.C."/>
        </authorList>
    </citation>
    <scope>NUCLEOTIDE SEQUENCE [LARGE SCALE GENOMIC DNA]</scope>
    <source>
        <strain>ATCC 29543 / DSM 1740 / CCUG 13145 / JCM 31913 / LMG 7466 / NCTC 11488 / FDC 602W</strain>
    </source>
</reference>
<feature type="chain" id="PRO_0000100900" description="Phosphoribosylaminoimidazole-succinocarboxamide synthase">
    <location>
        <begin position="1"/>
        <end position="236"/>
    </location>
</feature>
<name>PUR7_WOLSU</name>
<keyword id="KW-0067">ATP-binding</keyword>
<keyword id="KW-0436">Ligase</keyword>
<keyword id="KW-0547">Nucleotide-binding</keyword>
<keyword id="KW-0658">Purine biosynthesis</keyword>
<keyword id="KW-1185">Reference proteome</keyword>